<proteinExistence type="evidence at transcript level"/>
<organism>
    <name type="scientific">Micropogonias undulatus</name>
    <name type="common">Atlantic croaker</name>
    <dbReference type="NCBI Taxonomy" id="29154"/>
    <lineage>
        <taxon>Eukaryota</taxon>
        <taxon>Metazoa</taxon>
        <taxon>Chordata</taxon>
        <taxon>Craniata</taxon>
        <taxon>Vertebrata</taxon>
        <taxon>Euteleostomi</taxon>
        <taxon>Actinopterygii</taxon>
        <taxon>Neopterygii</taxon>
        <taxon>Teleostei</taxon>
        <taxon>Neoteleostei</taxon>
        <taxon>Acanthomorphata</taxon>
        <taxon>Eupercaria</taxon>
        <taxon>Sciaenidae</taxon>
        <taxon>Micropogonias</taxon>
    </lineage>
</organism>
<comment type="function">
    <text>The steroid hormones and their receptors are involved in the regulation of eukaryotic gene expression and affect cellular proliferation and differentiation in target tissues.</text>
</comment>
<comment type="subunit">
    <text evidence="1">Binds DNA as a homodimer. Can form a heterodimer with ER-beta (By similarity).</text>
</comment>
<comment type="subcellular location">
    <subcellularLocation>
        <location>Nucleus</location>
    </subcellularLocation>
</comment>
<comment type="tissue specificity">
    <text>Abundant in the liver, less abundant in the testes and barely detectable in the ovary and brain.</text>
</comment>
<comment type="domain">
    <text>Composed of three domains: a modulating N-terminal domain, a DNA-binding domain and a C-terminal ligand-binding domain.</text>
</comment>
<comment type="similarity">
    <text evidence="5">Belongs to the nuclear hormone receptor family. NR3 subfamily.</text>
</comment>
<reference key="1">
    <citation type="journal article" date="2000" name="Proc. Natl. Acad. Sci. U.S.A.">
        <title>Identification of a third distinct estrogen receptor and reclassification of estrogen receptors in teleosts.</title>
        <authorList>
            <person name="Hawkins M.B."/>
            <person name="Thornton J.W."/>
            <person name="Crews D."/>
            <person name="Skipper J.K."/>
            <person name="Dotte A."/>
            <person name="Thomas P."/>
        </authorList>
    </citation>
    <scope>NUCLEOTIDE SEQUENCE [MRNA]</scope>
    <source>
        <tissue>Liver</tissue>
    </source>
</reference>
<evidence type="ECO:0000250" key="1"/>
<evidence type="ECO:0000255" key="2">
    <source>
        <dbReference type="PROSITE-ProRule" id="PRU00407"/>
    </source>
</evidence>
<evidence type="ECO:0000255" key="3">
    <source>
        <dbReference type="PROSITE-ProRule" id="PRU01189"/>
    </source>
</evidence>
<evidence type="ECO:0000256" key="4">
    <source>
        <dbReference type="SAM" id="MobiDB-lite"/>
    </source>
</evidence>
<evidence type="ECO:0000305" key="5"/>
<accession>P57753</accession>
<sequence>PTSPLVFVPSSPRLSPFMHPPSHHYLETTSTPVYRSSVSSSQQQLSREDQCGTSDDSYSVGESGAGAGAGAGGFEMAKEMRFCAVCSDYASGYDYGVWSCEGCKAFFKRSIQGHNDYMCPATNQCTIDRNRRKSCQACRLRKCYQVGMMKGGVRKDRGRVLRRDKRRTGTSDKASKDLEHRTAPPQDRRKHSSSSSSAGGGGKSSIIGMSPDQVLLLLQGAEPPVLCSRQKLSRPYTEVTMMTLLTSMADKELVHMIAWAKKLPGFLQLSLHDQVQLLESSWLEVLMIGLIWRSIHCPGKLIFAQDLILDRSEGDCVEGMAEIFDMLLATTSRFRMLKLKTEEFVCLKAIILLNSGAFSFCTGTMEPLHDGAAVQNMLDTITDALIHHISQSGCSAQQQSRRQAHLLLLLSHIRHMSNKGMEHLYSMKCKNKVPLYDLLLEMLDAHRIHRPDRPAESWSQADREPPYTTSNNNNSSSSSGGGDGGPSSAGSGSGPRVNHESLSRAPTGPGVLQYGGPRSDCTHIL</sequence>
<keyword id="KW-0238">DNA-binding</keyword>
<keyword id="KW-0446">Lipid-binding</keyword>
<keyword id="KW-0479">Metal-binding</keyword>
<keyword id="KW-0539">Nucleus</keyword>
<keyword id="KW-0675">Receptor</keyword>
<keyword id="KW-0754">Steroid-binding</keyword>
<keyword id="KW-0804">Transcription</keyword>
<keyword id="KW-0805">Transcription regulation</keyword>
<keyword id="KW-0862">Zinc</keyword>
<keyword id="KW-0863">Zinc-finger</keyword>
<dbReference type="EMBL" id="AF298183">
    <property type="protein sequence ID" value="AAG16713.1"/>
    <property type="molecule type" value="mRNA"/>
</dbReference>
<dbReference type="SMR" id="P57753"/>
<dbReference type="GO" id="GO:0005634">
    <property type="term" value="C:nucleus"/>
    <property type="evidence" value="ECO:0000250"/>
    <property type="project" value="UniProtKB"/>
</dbReference>
<dbReference type="GO" id="GO:0042562">
    <property type="term" value="F:hormone binding"/>
    <property type="evidence" value="ECO:0007669"/>
    <property type="project" value="UniProtKB-ARBA"/>
</dbReference>
<dbReference type="GO" id="GO:0030284">
    <property type="term" value="F:nuclear estrogen receptor activity"/>
    <property type="evidence" value="ECO:0007669"/>
    <property type="project" value="InterPro"/>
</dbReference>
<dbReference type="GO" id="GO:0043565">
    <property type="term" value="F:sequence-specific DNA binding"/>
    <property type="evidence" value="ECO:0007669"/>
    <property type="project" value="InterPro"/>
</dbReference>
<dbReference type="GO" id="GO:0005496">
    <property type="term" value="F:steroid binding"/>
    <property type="evidence" value="ECO:0007669"/>
    <property type="project" value="UniProtKB-KW"/>
</dbReference>
<dbReference type="GO" id="GO:0008270">
    <property type="term" value="F:zinc ion binding"/>
    <property type="evidence" value="ECO:0007669"/>
    <property type="project" value="UniProtKB-KW"/>
</dbReference>
<dbReference type="CDD" id="cd07171">
    <property type="entry name" value="NR_DBD_ER"/>
    <property type="match status" value="1"/>
</dbReference>
<dbReference type="CDD" id="cd06949">
    <property type="entry name" value="NR_LBD_ER"/>
    <property type="match status" value="1"/>
</dbReference>
<dbReference type="FunFam" id="1.10.565.10:FF:000010">
    <property type="entry name" value="Estrogen receptor"/>
    <property type="match status" value="1"/>
</dbReference>
<dbReference type="FunFam" id="3.30.50.10:FF:000014">
    <property type="entry name" value="Estrogen receptor beta"/>
    <property type="match status" value="1"/>
</dbReference>
<dbReference type="Gene3D" id="3.30.50.10">
    <property type="entry name" value="Erythroid Transcription Factor GATA-1, subunit A"/>
    <property type="match status" value="1"/>
</dbReference>
<dbReference type="Gene3D" id="1.10.565.10">
    <property type="entry name" value="Retinoid X Receptor"/>
    <property type="match status" value="1"/>
</dbReference>
<dbReference type="InterPro" id="IPR024178">
    <property type="entry name" value="Est_rcpt/est-rel_rcp"/>
</dbReference>
<dbReference type="InterPro" id="IPR046944">
    <property type="entry name" value="Estr_rcpt_N"/>
</dbReference>
<dbReference type="InterPro" id="IPR035500">
    <property type="entry name" value="NHR-like_dom_sf"/>
</dbReference>
<dbReference type="InterPro" id="IPR000536">
    <property type="entry name" value="Nucl_hrmn_rcpt_lig-bd"/>
</dbReference>
<dbReference type="InterPro" id="IPR050200">
    <property type="entry name" value="Nuclear_hormone_rcpt_NR3"/>
</dbReference>
<dbReference type="InterPro" id="IPR001723">
    <property type="entry name" value="Nuclear_hrmn_rcpt"/>
</dbReference>
<dbReference type="InterPro" id="IPR001628">
    <property type="entry name" value="Znf_hrmn_rcpt"/>
</dbReference>
<dbReference type="InterPro" id="IPR013088">
    <property type="entry name" value="Znf_NHR/GATA"/>
</dbReference>
<dbReference type="PANTHER" id="PTHR48092">
    <property type="entry name" value="KNIRPS-RELATED PROTEIN-RELATED"/>
    <property type="match status" value="1"/>
</dbReference>
<dbReference type="Pfam" id="PF00104">
    <property type="entry name" value="Hormone_recep"/>
    <property type="match status" value="1"/>
</dbReference>
<dbReference type="Pfam" id="PF02159">
    <property type="entry name" value="Oest_recep"/>
    <property type="match status" value="1"/>
</dbReference>
<dbReference type="Pfam" id="PF00105">
    <property type="entry name" value="zf-C4"/>
    <property type="match status" value="1"/>
</dbReference>
<dbReference type="PIRSF" id="PIRSF002527">
    <property type="entry name" value="ER-like_NR"/>
    <property type="match status" value="1"/>
</dbReference>
<dbReference type="PRINTS" id="PR00398">
    <property type="entry name" value="STRDHORMONER"/>
</dbReference>
<dbReference type="PRINTS" id="PR00047">
    <property type="entry name" value="STROIDFINGER"/>
</dbReference>
<dbReference type="SMART" id="SM00430">
    <property type="entry name" value="HOLI"/>
    <property type="match status" value="1"/>
</dbReference>
<dbReference type="SMART" id="SM00399">
    <property type="entry name" value="ZnF_C4"/>
    <property type="match status" value="1"/>
</dbReference>
<dbReference type="SUPFAM" id="SSF57716">
    <property type="entry name" value="Glucocorticoid receptor-like (DNA-binding domain)"/>
    <property type="match status" value="1"/>
</dbReference>
<dbReference type="SUPFAM" id="SSF48508">
    <property type="entry name" value="Nuclear receptor ligand-binding domain"/>
    <property type="match status" value="1"/>
</dbReference>
<dbReference type="PROSITE" id="PS51843">
    <property type="entry name" value="NR_LBD"/>
    <property type="match status" value="1"/>
</dbReference>
<dbReference type="PROSITE" id="PS51030">
    <property type="entry name" value="NUCLEAR_REC_DBD_2"/>
    <property type="match status" value="1"/>
</dbReference>
<protein>
    <recommendedName>
        <fullName>Estrogen receptor</fullName>
        <shortName>ER</shortName>
    </recommendedName>
    <alternativeName>
        <fullName>ER-alpha</fullName>
    </alternativeName>
    <alternativeName>
        <fullName>Estradiol receptor</fullName>
    </alternativeName>
    <alternativeName>
        <fullName>Nuclear receptor subfamily 3 group A member 1</fullName>
    </alternativeName>
</protein>
<name>ESR1_MICUN</name>
<gene>
    <name type="primary">esr1</name>
    <name type="synonym">esr</name>
    <name type="synonym">nr3a1</name>
</gene>
<feature type="chain" id="PRO_0000053630" description="Estrogen receptor">
    <location>
        <begin position="1" status="less than"/>
        <end position="525"/>
    </location>
</feature>
<feature type="domain" description="NR LBD" evidence="3">
    <location>
        <begin position="210"/>
        <end position="446"/>
    </location>
</feature>
<feature type="DNA-binding region" description="Nuclear receptor" evidence="2">
    <location>
        <begin position="83"/>
        <end position="148"/>
    </location>
</feature>
<feature type="zinc finger region" description="NR C4-type" evidence="2">
    <location>
        <begin position="83"/>
        <end position="103"/>
    </location>
</feature>
<feature type="zinc finger region" description="NR C4-type" evidence="2">
    <location>
        <begin position="119"/>
        <end position="143"/>
    </location>
</feature>
<feature type="region of interest" description="Modulating">
    <location>
        <begin position="1" status="less than"/>
        <end position="82"/>
    </location>
</feature>
<feature type="region of interest" description="Disordered" evidence="4">
    <location>
        <begin position="1"/>
        <end position="59"/>
    </location>
</feature>
<feature type="region of interest" description="Hinge">
    <location>
        <begin position="149"/>
        <end position="209"/>
    </location>
</feature>
<feature type="region of interest" description="Disordered" evidence="4">
    <location>
        <begin position="154"/>
        <end position="203"/>
    </location>
</feature>
<feature type="region of interest" description="Disordered" evidence="4">
    <location>
        <begin position="452"/>
        <end position="525"/>
    </location>
</feature>
<feature type="compositionally biased region" description="Low complexity" evidence="4">
    <location>
        <begin position="36"/>
        <end position="45"/>
    </location>
</feature>
<feature type="compositionally biased region" description="Basic and acidic residues" evidence="4">
    <location>
        <begin position="154"/>
        <end position="182"/>
    </location>
</feature>
<feature type="compositionally biased region" description="Basic and acidic residues" evidence="4">
    <location>
        <begin position="452"/>
        <end position="465"/>
    </location>
</feature>
<feature type="compositionally biased region" description="Gly residues" evidence="4">
    <location>
        <begin position="479"/>
        <end position="493"/>
    </location>
</feature>
<feature type="non-terminal residue">
    <location>
        <position position="1"/>
    </location>
</feature>